<comment type="function">
    <text evidence="1">RuBisCO catalyzes two reactions: the carboxylation of D-ribulose 1,5-bisphosphate, the primary event in carbon dioxide fixation, as well as the oxidative fragmentation of the pentose substrate. Both reactions occur simultaneously and in competition at the same active site. Although the small subunit is not catalytic it is essential for maximal activity.</text>
</comment>
<comment type="subunit">
    <text evidence="1">Heterohexadecamer of 8 large and 8 small subunits.</text>
</comment>
<comment type="subcellular location">
    <subcellularLocation>
        <location evidence="1">Plastid</location>
        <location evidence="1">Chloroplast</location>
    </subcellularLocation>
</comment>
<comment type="miscellaneous">
    <text evidence="1">The basic functional RuBisCO is composed of a large chain homodimer in a 'head-to-tail' conformation. In form I RuBisCO this homodimer is arranged in a barrel-like tetramer with the small subunits forming a tetrameric 'cap' on each end of the 'barrel'.</text>
</comment>
<comment type="similarity">
    <text evidence="1">Belongs to the RuBisCO small chain family.</text>
</comment>
<protein>
    <recommendedName>
        <fullName evidence="1">Ribulose bisphosphate carboxylase small subunit, chloroplastic 4</fullName>
        <shortName evidence="1">RuBisCO small subunit 4</shortName>
    </recommendedName>
</protein>
<feature type="transit peptide" description="Chloroplast" evidence="1">
    <location>
        <begin position="1"/>
        <end position="54"/>
    </location>
</feature>
<feature type="chain" id="PRO_0000031495" description="Ribulose bisphosphate carboxylase small subunit, chloroplastic 4" evidence="1">
    <location>
        <begin position="55"/>
        <end position="178"/>
    </location>
</feature>
<sequence length="178" mass="20122">MASISSTVATVSRAAPAQANMVAPFTGLKSNAAFPATKKANDFSTLPSNGGRVQCMKVWPPLGKKKYETLSYLPNLTEAQLAKEVDYLLRNKWVPCLEFELEHGFVYRENARSPGYYDGRYWTMWKLPMFGCTDSAQVMKELQECKKEYPQAWIRIIGFDNVRQVQCISFIASKPDGF</sequence>
<keyword id="KW-0113">Calvin cycle</keyword>
<keyword id="KW-0120">Carbon dioxide fixation</keyword>
<keyword id="KW-0150">Chloroplast</keyword>
<keyword id="KW-0601">Photorespiration</keyword>
<keyword id="KW-0602">Photosynthesis</keyword>
<keyword id="KW-0934">Plastid</keyword>
<keyword id="KW-0809">Transit peptide</keyword>
<evidence type="ECO:0000255" key="1">
    <source>
        <dbReference type="HAMAP-Rule" id="MF_00860"/>
    </source>
</evidence>
<gene>
    <name evidence="1" type="primary">RBCS4</name>
</gene>
<reference key="1">
    <citation type="online journal article" date="1996" name="Plant Gene Register">
        <title>Sequences of seven cDNAs encoding the Rubisco small subunit from Flaveria pringlei.</title>
        <authorList>
            <person name="McGonigle B."/>
            <person name="Lai L.B."/>
            <person name="Nelson T."/>
        </authorList>
        <locator>PGR96-057</locator>
    </citation>
    <scope>NUCLEOTIDE SEQUENCE [MRNA]</scope>
    <source>
        <tissue>Leaf</tissue>
    </source>
</reference>
<proteinExistence type="evidence at transcript level"/>
<dbReference type="EMBL" id="U29936">
    <property type="protein sequence ID" value="AAB67848.1"/>
    <property type="molecule type" value="mRNA"/>
</dbReference>
<dbReference type="SMR" id="Q39746"/>
<dbReference type="GO" id="GO:0009507">
    <property type="term" value="C:chloroplast"/>
    <property type="evidence" value="ECO:0007669"/>
    <property type="project" value="UniProtKB-SubCell"/>
</dbReference>
<dbReference type="GO" id="GO:0016984">
    <property type="term" value="F:ribulose-bisphosphate carboxylase activity"/>
    <property type="evidence" value="ECO:0007669"/>
    <property type="project" value="UniProtKB-UniRule"/>
</dbReference>
<dbReference type="GO" id="GO:0009853">
    <property type="term" value="P:photorespiration"/>
    <property type="evidence" value="ECO:0007669"/>
    <property type="project" value="UniProtKB-KW"/>
</dbReference>
<dbReference type="GO" id="GO:0019253">
    <property type="term" value="P:reductive pentose-phosphate cycle"/>
    <property type="evidence" value="ECO:0007669"/>
    <property type="project" value="UniProtKB-UniRule"/>
</dbReference>
<dbReference type="CDD" id="cd03527">
    <property type="entry name" value="RuBisCO_small"/>
    <property type="match status" value="1"/>
</dbReference>
<dbReference type="FunFam" id="3.30.190.10:FF:000001">
    <property type="entry name" value="Ribulose bisphosphate carboxylase small chain, chloroplastic"/>
    <property type="match status" value="1"/>
</dbReference>
<dbReference type="Gene3D" id="3.30.190.10">
    <property type="entry name" value="Ribulose bisphosphate carboxylase, small subunit"/>
    <property type="match status" value="1"/>
</dbReference>
<dbReference type="HAMAP" id="MF_00859">
    <property type="entry name" value="RuBisCO_S_bact"/>
    <property type="match status" value="1"/>
</dbReference>
<dbReference type="InterPro" id="IPR024681">
    <property type="entry name" value="RuBisCO_ssu"/>
</dbReference>
<dbReference type="InterPro" id="IPR000894">
    <property type="entry name" value="RuBisCO_ssu_dom"/>
</dbReference>
<dbReference type="InterPro" id="IPR024680">
    <property type="entry name" value="RuBisCO_ssu_N"/>
</dbReference>
<dbReference type="InterPro" id="IPR036385">
    <property type="entry name" value="RuBisCO_ssu_sf"/>
</dbReference>
<dbReference type="PANTHER" id="PTHR31262">
    <property type="entry name" value="RIBULOSE BISPHOSPHATE CARBOXYLASE SMALL CHAIN 1, CHLOROPLASTIC"/>
    <property type="match status" value="1"/>
</dbReference>
<dbReference type="PANTHER" id="PTHR31262:SF10">
    <property type="entry name" value="RIBULOSE BISPHOSPHATE CARBOXYLASE SMALL SUBUNIT 1A, CHLOROPLASTIC-RELATED"/>
    <property type="match status" value="1"/>
</dbReference>
<dbReference type="Pfam" id="PF12338">
    <property type="entry name" value="RbcS"/>
    <property type="match status" value="1"/>
</dbReference>
<dbReference type="Pfam" id="PF00101">
    <property type="entry name" value="RuBisCO_small"/>
    <property type="match status" value="1"/>
</dbReference>
<dbReference type="PRINTS" id="PR00152">
    <property type="entry name" value="RUBISCOSMALL"/>
</dbReference>
<dbReference type="SMART" id="SM00961">
    <property type="entry name" value="RuBisCO_small"/>
    <property type="match status" value="1"/>
</dbReference>
<dbReference type="SUPFAM" id="SSF55239">
    <property type="entry name" value="RuBisCO, small subunit"/>
    <property type="match status" value="1"/>
</dbReference>
<name>RBS4_FLAPR</name>
<organism>
    <name type="scientific">Flaveria pringlei</name>
    <dbReference type="NCBI Taxonomy" id="4226"/>
    <lineage>
        <taxon>Eukaryota</taxon>
        <taxon>Viridiplantae</taxon>
        <taxon>Streptophyta</taxon>
        <taxon>Embryophyta</taxon>
        <taxon>Tracheophyta</taxon>
        <taxon>Spermatophyta</taxon>
        <taxon>Magnoliopsida</taxon>
        <taxon>eudicotyledons</taxon>
        <taxon>Gunneridae</taxon>
        <taxon>Pentapetalae</taxon>
        <taxon>asterids</taxon>
        <taxon>campanulids</taxon>
        <taxon>Asterales</taxon>
        <taxon>Asteraceae</taxon>
        <taxon>Asteroideae</taxon>
        <taxon>Heliantheae alliance</taxon>
        <taxon>Tageteae</taxon>
        <taxon>Flaveria</taxon>
    </lineage>
</organism>
<accession>Q39746</accession>